<gene>
    <name evidence="5" type="primary">FgAQP1</name>
    <name type="ORF">FG00811</name>
    <name type="ORF">FGRAMPH1_01T02029</name>
</gene>
<protein>
    <recommendedName>
        <fullName evidence="5">Aquaporin-1</fullName>
    </recommendedName>
</protein>
<accession>V6QVS3</accession>
<keyword id="KW-0325">Glycoprotein</keyword>
<keyword id="KW-0472">Membrane</keyword>
<keyword id="KW-0539">Nucleus</keyword>
<keyword id="KW-1185">Reference proteome</keyword>
<keyword id="KW-0677">Repeat</keyword>
<keyword id="KW-0812">Transmembrane</keyword>
<keyword id="KW-1133">Transmembrane helix</keyword>
<keyword id="KW-0813">Transport</keyword>
<name>AQP1_GIBZE</name>
<sequence>MVQFGSRANTNMTGLPTEQAVEDRRVGNPKRDRMRNALVIVLGEFCGTFMFLLLSFIGAQTALVTNSPSDAGSPLLPFSLMYIAASFGTALAVNVWIFYRVSGGMFNPAVTLGLVLVGAVTPIHALLIIPTQLVAAITAAGITDALLPGKLLVTNALGNGTSVAQGVFIEMFLTSQLVLTVYFLAVEKHRSTHLAPIGIGISVFIAHICATNWTGTSINPARSFGPSVVAGFHGYDWIYYIGPFMGSLLAFGCYKIFKVLEYQTANPGQDDDNLDRSGHHHFFGHRKEPMPHTHTDNIEPKDHGVPQRNDSVIDDQMV</sequence>
<reference key="1">
    <citation type="journal article" date="2007" name="Science">
        <title>The Fusarium graminearum genome reveals a link between localized polymorphism and pathogen specialization.</title>
        <authorList>
            <person name="Cuomo C.A."/>
            <person name="Gueldener U."/>
            <person name="Xu J.-R."/>
            <person name="Trail F."/>
            <person name="Turgeon B.G."/>
            <person name="Di Pietro A."/>
            <person name="Walton J.D."/>
            <person name="Ma L.-J."/>
            <person name="Baker S.E."/>
            <person name="Rep M."/>
            <person name="Adam G."/>
            <person name="Antoniw J."/>
            <person name="Baldwin T."/>
            <person name="Calvo S.E."/>
            <person name="Chang Y.-L."/>
            <person name="DeCaprio D."/>
            <person name="Gale L.R."/>
            <person name="Gnerre S."/>
            <person name="Goswami R.S."/>
            <person name="Hammond-Kosack K."/>
            <person name="Harris L.J."/>
            <person name="Hilburn K."/>
            <person name="Kennell J.C."/>
            <person name="Kroken S."/>
            <person name="Magnuson J.K."/>
            <person name="Mannhaupt G."/>
            <person name="Mauceli E.W."/>
            <person name="Mewes H.-W."/>
            <person name="Mitterbauer R."/>
            <person name="Muehlbauer G."/>
            <person name="Muensterkoetter M."/>
            <person name="Nelson D."/>
            <person name="O'Donnell K."/>
            <person name="Ouellet T."/>
            <person name="Qi W."/>
            <person name="Quesneville H."/>
            <person name="Roncero M.I.G."/>
            <person name="Seong K.-Y."/>
            <person name="Tetko I.V."/>
            <person name="Urban M."/>
            <person name="Waalwijk C."/>
            <person name="Ward T.J."/>
            <person name="Yao J."/>
            <person name="Birren B.W."/>
            <person name="Kistler H.C."/>
        </authorList>
    </citation>
    <scope>NUCLEOTIDE SEQUENCE [LARGE SCALE GENOMIC DNA]</scope>
    <source>
        <strain>ATCC MYA-4620 / CBS 123657 / FGSC 9075 / NRRL 31084 / PH-1</strain>
    </source>
</reference>
<reference key="2">
    <citation type="journal article" date="2010" name="Nature">
        <title>Comparative genomics reveals mobile pathogenicity chromosomes in Fusarium.</title>
        <authorList>
            <person name="Ma L.-J."/>
            <person name="van der Does H.C."/>
            <person name="Borkovich K.A."/>
            <person name="Coleman J.J."/>
            <person name="Daboussi M.-J."/>
            <person name="Di Pietro A."/>
            <person name="Dufresne M."/>
            <person name="Freitag M."/>
            <person name="Grabherr M."/>
            <person name="Henrissat B."/>
            <person name="Houterman P.M."/>
            <person name="Kang S."/>
            <person name="Shim W.-B."/>
            <person name="Woloshuk C."/>
            <person name="Xie X."/>
            <person name="Xu J.-R."/>
            <person name="Antoniw J."/>
            <person name="Baker S.E."/>
            <person name="Bluhm B.H."/>
            <person name="Breakspear A."/>
            <person name="Brown D.W."/>
            <person name="Butchko R.A.E."/>
            <person name="Chapman S."/>
            <person name="Coulson R."/>
            <person name="Coutinho P.M."/>
            <person name="Danchin E.G.J."/>
            <person name="Diener A."/>
            <person name="Gale L.R."/>
            <person name="Gardiner D.M."/>
            <person name="Goff S."/>
            <person name="Hammond-Kosack K.E."/>
            <person name="Hilburn K."/>
            <person name="Hua-Van A."/>
            <person name="Jonkers W."/>
            <person name="Kazan K."/>
            <person name="Kodira C.D."/>
            <person name="Koehrsen M."/>
            <person name="Kumar L."/>
            <person name="Lee Y.-H."/>
            <person name="Li L."/>
            <person name="Manners J.M."/>
            <person name="Miranda-Saavedra D."/>
            <person name="Mukherjee M."/>
            <person name="Park G."/>
            <person name="Park J."/>
            <person name="Park S.-Y."/>
            <person name="Proctor R.H."/>
            <person name="Regev A."/>
            <person name="Ruiz-Roldan M.C."/>
            <person name="Sain D."/>
            <person name="Sakthikumar S."/>
            <person name="Sykes S."/>
            <person name="Schwartz D.C."/>
            <person name="Turgeon B.G."/>
            <person name="Wapinski I."/>
            <person name="Yoder O."/>
            <person name="Young S."/>
            <person name="Zeng Q."/>
            <person name="Zhou S."/>
            <person name="Galagan J."/>
            <person name="Cuomo C.A."/>
            <person name="Kistler H.C."/>
            <person name="Rep M."/>
        </authorList>
    </citation>
    <scope>GENOME REANNOTATION</scope>
    <source>
        <strain>ATCC MYA-4620 / CBS 123657 / FGSC 9075 / NRRL 31084 / PH-1</strain>
    </source>
</reference>
<reference key="3">
    <citation type="journal article" date="2015" name="BMC Genomics">
        <title>The completed genome sequence of the pathogenic ascomycete fungus Fusarium graminearum.</title>
        <authorList>
            <person name="King R."/>
            <person name="Urban M."/>
            <person name="Hammond-Kosack M.C.U."/>
            <person name="Hassani-Pak K."/>
            <person name="Hammond-Kosack K.E."/>
        </authorList>
    </citation>
    <scope>NUCLEOTIDE SEQUENCE [LARGE SCALE GENOMIC DNA]</scope>
    <source>
        <strain>ATCC MYA-4620 / CBS 123657 / FGSC 9075 / NRRL 31084 / PH-1</strain>
    </source>
</reference>
<reference key="4">
    <citation type="journal article" date="2018" name="Curr. Genet.">
        <title>Aquaporin1 regulates development, secondary metabolism and stress responses in Fusarium graminearum.</title>
        <authorList>
            <person name="Ding M."/>
            <person name="Li J."/>
            <person name="Fan X."/>
            <person name="He F."/>
            <person name="Yu X."/>
            <person name="Chen L."/>
            <person name="Zou S."/>
            <person name="Liang Y."/>
            <person name="Yu J."/>
        </authorList>
    </citation>
    <scope>FUNCTION</scope>
    <scope>DISRUPTION PHENOTYPE</scope>
    <scope>SUBCELLULAR LOCATION</scope>
    <scope>DOMAIN</scope>
</reference>
<comment type="function">
    <text evidence="4">Probable water channel involved in responses to changes in environmental conditions and conidiation (PubMed:29502265). Involved in responses to hyperosmotic conditions, oxidative stress and cell wall destabilization (PubMed:29502265). Also required for proper transcriptional activation of genes involved in aurofusarin biosynthesis (PubMed:29502265). Not involved in pathogenicity, but negatively regulates deoxynivalenol (DON) production (PubMed:29502265).</text>
</comment>
<comment type="catalytic activity">
    <reaction evidence="7">
        <text>H2O(in) = H2O(out)</text>
        <dbReference type="Rhea" id="RHEA:29667"/>
        <dbReference type="ChEBI" id="CHEBI:15377"/>
    </reaction>
</comment>
<comment type="subcellular location">
    <subcellularLocation>
        <location evidence="4">Nucleus membrane</location>
        <topology evidence="1">Multi-pass membrane protein</topology>
    </subcellularLocation>
    <text evidence="4">Localizes to the nuclear membrane in conidia but not in hyphae.</text>
</comment>
<comment type="domain">
    <text evidence="7">Aquaporins contain two tandem repeats each containing three membrane-spanning domains and a pore-forming loop with the signature motif Asn-Pro-Ala (NPA).</text>
</comment>
<comment type="disruption phenotype">
    <text evidence="4">Leads to whitish colonies with longer aerial hyphae and reduced conidiation and perithecium formation, with morphologically abnormal conidia that undergo abnormal germination (PubMed:29502265). Increases the conidium autophagy (PubMed:29502265). Results in a significant higher production of deoxynivalenol (DON) but does not affect pathogenicity (PubMed:29502265). Exhibits increased resistance to osmotic and oxidative stress as well as cell-wall perturbing agents (PubMed:29502265).</text>
</comment>
<comment type="similarity">
    <text evidence="6">Belongs to the MIP/aquaporin (TC 1.A.8) family.</text>
</comment>
<proteinExistence type="inferred from homology"/>
<organism>
    <name type="scientific">Gibberella zeae (strain ATCC MYA-4620 / CBS 123657 / FGSC 9075 / NRRL 31084 / PH-1)</name>
    <name type="common">Wheat head blight fungus</name>
    <name type="synonym">Fusarium graminearum</name>
    <dbReference type="NCBI Taxonomy" id="229533"/>
    <lineage>
        <taxon>Eukaryota</taxon>
        <taxon>Fungi</taxon>
        <taxon>Dikarya</taxon>
        <taxon>Ascomycota</taxon>
        <taxon>Pezizomycotina</taxon>
        <taxon>Sordariomycetes</taxon>
        <taxon>Hypocreomycetidae</taxon>
        <taxon>Hypocreales</taxon>
        <taxon>Nectriaceae</taxon>
        <taxon>Fusarium</taxon>
    </lineage>
</organism>
<evidence type="ECO:0000255" key="1"/>
<evidence type="ECO:0000255" key="2">
    <source>
        <dbReference type="PROSITE-ProRule" id="PRU00498"/>
    </source>
</evidence>
<evidence type="ECO:0000256" key="3">
    <source>
        <dbReference type="SAM" id="MobiDB-lite"/>
    </source>
</evidence>
<evidence type="ECO:0000269" key="4">
    <source>
    </source>
</evidence>
<evidence type="ECO:0000303" key="5">
    <source>
    </source>
</evidence>
<evidence type="ECO:0000305" key="6"/>
<evidence type="ECO:0000305" key="7">
    <source>
    </source>
</evidence>
<dbReference type="EMBL" id="HG970332">
    <property type="protein sequence ID" value="CEF72815.1"/>
    <property type="molecule type" value="Genomic_DNA"/>
</dbReference>
<dbReference type="RefSeq" id="XP_011316524.1">
    <property type="nucleotide sequence ID" value="XM_011318222.1"/>
</dbReference>
<dbReference type="SMR" id="V6QVS3"/>
<dbReference type="FunCoup" id="V6QVS3">
    <property type="interactions" value="255"/>
</dbReference>
<dbReference type="STRING" id="229533.V6QVS3"/>
<dbReference type="KEGG" id="fgr:FGSG_00811"/>
<dbReference type="VEuPathDB" id="FungiDB:FGRAMPH1_01G02029"/>
<dbReference type="eggNOG" id="KOG0223">
    <property type="taxonomic scope" value="Eukaryota"/>
</dbReference>
<dbReference type="HOGENOM" id="CLU_020019_1_7_1"/>
<dbReference type="InParanoid" id="V6QVS3"/>
<dbReference type="OrthoDB" id="125371at110618"/>
<dbReference type="Proteomes" id="UP000070720">
    <property type="component" value="Chromosome 1"/>
</dbReference>
<dbReference type="GO" id="GO:0031965">
    <property type="term" value="C:nuclear membrane"/>
    <property type="evidence" value="ECO:0007669"/>
    <property type="project" value="UniProtKB-SubCell"/>
</dbReference>
<dbReference type="GO" id="GO:0005886">
    <property type="term" value="C:plasma membrane"/>
    <property type="evidence" value="ECO:0007669"/>
    <property type="project" value="TreeGrafter"/>
</dbReference>
<dbReference type="GO" id="GO:0015250">
    <property type="term" value="F:water channel activity"/>
    <property type="evidence" value="ECO:0007669"/>
    <property type="project" value="TreeGrafter"/>
</dbReference>
<dbReference type="FunFam" id="1.20.1080.10:FF:000014">
    <property type="entry name" value="Aquaporin 1"/>
    <property type="match status" value="1"/>
</dbReference>
<dbReference type="Gene3D" id="1.20.1080.10">
    <property type="entry name" value="Glycerol uptake facilitator protein"/>
    <property type="match status" value="1"/>
</dbReference>
<dbReference type="InterPro" id="IPR023271">
    <property type="entry name" value="Aquaporin-like"/>
</dbReference>
<dbReference type="InterPro" id="IPR034294">
    <property type="entry name" value="Aquaporin_transptr"/>
</dbReference>
<dbReference type="InterPro" id="IPR000425">
    <property type="entry name" value="MIP"/>
</dbReference>
<dbReference type="PANTHER" id="PTHR19139">
    <property type="entry name" value="AQUAPORIN TRANSPORTER"/>
    <property type="match status" value="1"/>
</dbReference>
<dbReference type="PANTHER" id="PTHR19139:SF199">
    <property type="entry name" value="MIP17260P"/>
    <property type="match status" value="1"/>
</dbReference>
<dbReference type="Pfam" id="PF00230">
    <property type="entry name" value="MIP"/>
    <property type="match status" value="1"/>
</dbReference>
<dbReference type="PRINTS" id="PR00783">
    <property type="entry name" value="MINTRINSICP"/>
</dbReference>
<dbReference type="SUPFAM" id="SSF81338">
    <property type="entry name" value="Aquaporin-like"/>
    <property type="match status" value="1"/>
</dbReference>
<feature type="chain" id="PRO_0000457431" description="Aquaporin-1">
    <location>
        <begin position="1"/>
        <end position="318"/>
    </location>
</feature>
<feature type="topological domain" description="Cytoplasmic" evidence="6">
    <location>
        <begin position="1"/>
        <end position="36"/>
    </location>
</feature>
<feature type="transmembrane region" description="Helical" evidence="1">
    <location>
        <begin position="37"/>
        <end position="57"/>
    </location>
</feature>
<feature type="topological domain" description="Extracellular" evidence="6">
    <location>
        <begin position="58"/>
        <end position="77"/>
    </location>
</feature>
<feature type="transmembrane region" description="Helical" evidence="1">
    <location>
        <begin position="78"/>
        <end position="98"/>
    </location>
</feature>
<feature type="topological domain" description="Cytoplasmic" evidence="6">
    <location>
        <begin position="99"/>
        <end position="108"/>
    </location>
</feature>
<feature type="transmembrane region" description="Helical" evidence="1">
    <location>
        <begin position="109"/>
        <end position="129"/>
    </location>
</feature>
<feature type="topological domain" description="Extracellular" evidence="6">
    <location>
        <begin position="130"/>
        <end position="165"/>
    </location>
</feature>
<feature type="transmembrane region" description="Helical" evidence="1">
    <location>
        <begin position="166"/>
        <end position="186"/>
    </location>
</feature>
<feature type="topological domain" description="Cytoplasmic" evidence="6">
    <location>
        <begin position="187"/>
        <end position="193"/>
    </location>
</feature>
<feature type="transmembrane region" description="Helical" evidence="1">
    <location>
        <begin position="194"/>
        <end position="214"/>
    </location>
</feature>
<feature type="topological domain" description="Extracellular" evidence="6">
    <location>
        <begin position="215"/>
        <end position="236"/>
    </location>
</feature>
<feature type="transmembrane region" description="Helical" evidence="1">
    <location>
        <begin position="237"/>
        <end position="257"/>
    </location>
</feature>
<feature type="topological domain" description="Cytoplasmic" evidence="6">
    <location>
        <begin position="258"/>
        <end position="318"/>
    </location>
</feature>
<feature type="region of interest" description="Disordered" evidence="3">
    <location>
        <begin position="1"/>
        <end position="27"/>
    </location>
</feature>
<feature type="region of interest" description="Disordered" evidence="3">
    <location>
        <begin position="268"/>
        <end position="318"/>
    </location>
</feature>
<feature type="short sequence motif" description="NPA 1" evidence="7">
    <location>
        <begin position="107"/>
        <end position="109"/>
    </location>
</feature>
<feature type="short sequence motif" description="NPA 2" evidence="7">
    <location>
        <begin position="219"/>
        <end position="221"/>
    </location>
</feature>
<feature type="compositionally biased region" description="Polar residues" evidence="3">
    <location>
        <begin position="1"/>
        <end position="16"/>
    </location>
</feature>
<feature type="compositionally biased region" description="Basic and acidic residues" evidence="3">
    <location>
        <begin position="285"/>
        <end position="305"/>
    </location>
</feature>
<feature type="glycosylation site" description="N-linked (GlcNAc...) asparagine" evidence="2">
    <location>
        <position position="159"/>
    </location>
</feature>